<reference key="1">
    <citation type="journal article" date="2011" name="PLoS Genet.">
        <title>Comparative genomic analysis of human fungal pathogens causing paracoccidioidomycosis.</title>
        <authorList>
            <person name="Desjardins C.A."/>
            <person name="Champion M.D."/>
            <person name="Holder J.W."/>
            <person name="Muszewska A."/>
            <person name="Goldberg J."/>
            <person name="Bailao A.M."/>
            <person name="Brigido M.M."/>
            <person name="Ferreira M.E."/>
            <person name="Garcia A.M."/>
            <person name="Grynberg M."/>
            <person name="Gujja S."/>
            <person name="Heiman D.I."/>
            <person name="Henn M.R."/>
            <person name="Kodira C.D."/>
            <person name="Leon-Narvaez H."/>
            <person name="Longo L.V.G."/>
            <person name="Ma L.-J."/>
            <person name="Malavazi I."/>
            <person name="Matsuo A.L."/>
            <person name="Morais F.V."/>
            <person name="Pereira M."/>
            <person name="Rodriguez-Brito S."/>
            <person name="Sakthikumar S."/>
            <person name="Salem-Izacc S.M."/>
            <person name="Sykes S.M."/>
            <person name="Teixeira M.M."/>
            <person name="Vallejo M.C."/>
            <person name="Walter M.E."/>
            <person name="Yandava C."/>
            <person name="Young S."/>
            <person name="Zeng Q."/>
            <person name="Zucker J."/>
            <person name="Felipe M.S."/>
            <person name="Goldman G.H."/>
            <person name="Haas B.J."/>
            <person name="McEwen J.G."/>
            <person name="Nino-Vega G."/>
            <person name="Puccia R."/>
            <person name="San-Blas G."/>
            <person name="Soares C.M."/>
            <person name="Birren B.W."/>
            <person name="Cuomo C.A."/>
        </authorList>
    </citation>
    <scope>NUCLEOTIDE SEQUENCE [LARGE SCALE GENOMIC DNA]</scope>
    <source>
        <strain>Pb03</strain>
    </source>
</reference>
<name>CBPYA_PARBP</name>
<comment type="function">
    <text evidence="1">Vacuolar carboxypeptidase involved in degradation of small peptides. Digests preferentially peptides containing an aliphatic or hydrophobic residue in P1' position, as well as methionine, leucine or phenylalanine in P1 position of ester substrate (By similarity).</text>
</comment>
<comment type="catalytic activity">
    <reaction evidence="3">
        <text>Release of a C-terminal amino acid with broad specificity.</text>
        <dbReference type="EC" id="3.4.16.5"/>
    </reaction>
</comment>
<comment type="subcellular location">
    <subcellularLocation>
        <location evidence="1">Vacuole</location>
    </subcellularLocation>
</comment>
<comment type="similarity">
    <text evidence="5">Belongs to the peptidase S10 family.</text>
</comment>
<proteinExistence type="inferred from homology"/>
<keyword id="KW-0121">Carboxypeptidase</keyword>
<keyword id="KW-1015">Disulfide bond</keyword>
<keyword id="KW-0325">Glycoprotein</keyword>
<keyword id="KW-0378">Hydrolase</keyword>
<keyword id="KW-0645">Protease</keyword>
<keyword id="KW-0732">Signal</keyword>
<keyword id="KW-0926">Vacuole</keyword>
<keyword id="KW-0865">Zymogen</keyword>
<dbReference type="EC" id="3.4.16.5"/>
<dbReference type="EMBL" id="KN305544">
    <property type="protein sequence ID" value="EEH16762.1"/>
    <property type="molecule type" value="Genomic_DNA"/>
</dbReference>
<dbReference type="SMR" id="C0SGX7"/>
<dbReference type="ESTHER" id="parbp-cbpya">
    <property type="family name" value="Carboxypeptidase_S10"/>
</dbReference>
<dbReference type="MEROPS" id="S10.001"/>
<dbReference type="GlyCosmos" id="C0SGX7">
    <property type="glycosylation" value="6 sites, No reported glycans"/>
</dbReference>
<dbReference type="VEuPathDB" id="FungiDB:PABG_06849"/>
<dbReference type="HOGENOM" id="CLU_008523_10_4_1"/>
<dbReference type="OrthoDB" id="10219at33183"/>
<dbReference type="GO" id="GO:0000324">
    <property type="term" value="C:fungal-type vacuole"/>
    <property type="evidence" value="ECO:0007669"/>
    <property type="project" value="TreeGrafter"/>
</dbReference>
<dbReference type="GO" id="GO:0004185">
    <property type="term" value="F:serine-type carboxypeptidase activity"/>
    <property type="evidence" value="ECO:0007669"/>
    <property type="project" value="UniProtKB-EC"/>
</dbReference>
<dbReference type="GO" id="GO:0006508">
    <property type="term" value="P:proteolysis"/>
    <property type="evidence" value="ECO:0007669"/>
    <property type="project" value="UniProtKB-KW"/>
</dbReference>
<dbReference type="FunFam" id="1.10.287.410:FF:000001">
    <property type="entry name" value="Carboxypeptidase Y"/>
    <property type="match status" value="1"/>
</dbReference>
<dbReference type="Gene3D" id="1.10.287.410">
    <property type="match status" value="1"/>
</dbReference>
<dbReference type="Gene3D" id="3.40.50.1820">
    <property type="entry name" value="alpha/beta hydrolase"/>
    <property type="match status" value="1"/>
</dbReference>
<dbReference type="InterPro" id="IPR029058">
    <property type="entry name" value="AB_hydrolase_fold"/>
</dbReference>
<dbReference type="InterPro" id="IPR001563">
    <property type="entry name" value="Peptidase_S10"/>
</dbReference>
<dbReference type="InterPro" id="IPR008442">
    <property type="entry name" value="Propeptide_carboxypepY"/>
</dbReference>
<dbReference type="InterPro" id="IPR018202">
    <property type="entry name" value="Ser_caboxypep_ser_AS"/>
</dbReference>
<dbReference type="PANTHER" id="PTHR11802:SF113">
    <property type="entry name" value="SERINE CARBOXYPEPTIDASE CTSA-4.1"/>
    <property type="match status" value="1"/>
</dbReference>
<dbReference type="PANTHER" id="PTHR11802">
    <property type="entry name" value="SERINE PROTEASE FAMILY S10 SERINE CARBOXYPEPTIDASE"/>
    <property type="match status" value="1"/>
</dbReference>
<dbReference type="Pfam" id="PF05388">
    <property type="entry name" value="Carbpep_Y_N"/>
    <property type="match status" value="1"/>
</dbReference>
<dbReference type="Pfam" id="PF00450">
    <property type="entry name" value="Peptidase_S10"/>
    <property type="match status" value="1"/>
</dbReference>
<dbReference type="PRINTS" id="PR00724">
    <property type="entry name" value="CRBOXYPTASEC"/>
</dbReference>
<dbReference type="SUPFAM" id="SSF53474">
    <property type="entry name" value="alpha/beta-Hydrolases"/>
    <property type="match status" value="1"/>
</dbReference>
<dbReference type="PROSITE" id="PS00131">
    <property type="entry name" value="CARBOXYPEPT_SER_SER"/>
    <property type="match status" value="1"/>
</dbReference>
<gene>
    <name type="primary">CPYA</name>
    <name type="ORF">PABG_06849</name>
</gene>
<sequence length="550" mass="61894">MKSLVLGLLVGSAIASGPLQHVLHAPPDPEPKPEPEPQVVKDPFEELRDTFDRLRNKAGDIWDDVMDNIPNIMSNMRPLTIPAKKFTRRPDSEWTHIVRGADLEALWVDDESGYKHRKIDGKLAQYDLRIKAVDPSDLGIDKVKQYSGYLDDNANDKHLFFWFFESRNDPFGDPVVLWLNGGPGCSSLTGMFFELGPASIDENITANYNPYSWNSNSSIIFLDQPVNVGYSYSSQAVSDTVTAAKDVYALLTLFFTQFRQYSAQDFHIAGESYAGHYIPVFASEILHHNNTNINLQSVLIGNGLTDPLSQYPFYRPMACGDGGYPSVLDSQSCQSMDNALPRCLSMIKSCYDIESTFTCLPASIYCNNALIGPYQKTGRNPYDVRTNCTGNDLCYPQLNYITEYLNKPHVMRSLGVEVDSYESCNMDINRNFLFHGDWMKPYHRLVPSLLARIPVLIYAGDADFICNWLGNKAWTEALEYPGHAKFAEAPMENLTMINSQGKNEVFGEVKSHSNLTFMRIFKAGHMTPFDSPQASLEFANSWLSGEWSEV</sequence>
<accession>C0SGX7</accession>
<organism>
    <name type="scientific">Paracoccidioides brasiliensis (strain Pb03)</name>
    <dbReference type="NCBI Taxonomy" id="482561"/>
    <lineage>
        <taxon>Eukaryota</taxon>
        <taxon>Fungi</taxon>
        <taxon>Dikarya</taxon>
        <taxon>Ascomycota</taxon>
        <taxon>Pezizomycotina</taxon>
        <taxon>Eurotiomycetes</taxon>
        <taxon>Eurotiomycetidae</taxon>
        <taxon>Onygenales</taxon>
        <taxon>Ajellomycetaceae</taxon>
        <taxon>Paracoccidioides</taxon>
    </lineage>
</organism>
<evidence type="ECO:0000250" key="1"/>
<evidence type="ECO:0000255" key="2"/>
<evidence type="ECO:0000255" key="3">
    <source>
        <dbReference type="PROSITE-ProRule" id="PRU10074"/>
    </source>
</evidence>
<evidence type="ECO:0000256" key="4">
    <source>
        <dbReference type="SAM" id="MobiDB-lite"/>
    </source>
</evidence>
<evidence type="ECO:0000305" key="5"/>
<protein>
    <recommendedName>
        <fullName>Carboxypeptidase Y homolog A</fullName>
        <ecNumber>3.4.16.5</ecNumber>
    </recommendedName>
</protein>
<feature type="signal peptide" evidence="2">
    <location>
        <begin position="1"/>
        <end position="18"/>
    </location>
</feature>
<feature type="propeptide" id="PRO_0000407465" evidence="1">
    <location>
        <begin position="19"/>
        <end position="131"/>
    </location>
</feature>
<feature type="chain" id="PRO_0000407466" description="Carboxypeptidase Y homolog A">
    <location>
        <begin position="132"/>
        <end position="550"/>
    </location>
</feature>
<feature type="region of interest" description="Disordered" evidence="4">
    <location>
        <begin position="20"/>
        <end position="39"/>
    </location>
</feature>
<feature type="active site" evidence="3">
    <location>
        <position position="272"/>
    </location>
</feature>
<feature type="active site" evidence="3">
    <location>
        <position position="463"/>
    </location>
</feature>
<feature type="active site" evidence="3">
    <location>
        <position position="525"/>
    </location>
</feature>
<feature type="glycosylation site" description="N-linked (GlcNAc...) asparagine" evidence="2">
    <location>
        <position position="203"/>
    </location>
</feature>
<feature type="glycosylation site" description="N-linked (GlcNAc...) asparagine" evidence="2">
    <location>
        <position position="216"/>
    </location>
</feature>
<feature type="glycosylation site" description="N-linked (GlcNAc...) asparagine" evidence="2">
    <location>
        <position position="289"/>
    </location>
</feature>
<feature type="glycosylation site" description="N-linked (GlcNAc...) asparagine" evidence="2">
    <location>
        <position position="387"/>
    </location>
</feature>
<feature type="glycosylation site" description="N-linked (GlcNAc...) asparagine" evidence="2">
    <location>
        <position position="493"/>
    </location>
</feature>
<feature type="glycosylation site" description="N-linked (GlcNAc...) asparagine" evidence="2">
    <location>
        <position position="514"/>
    </location>
</feature>
<feature type="disulfide bond" evidence="1">
    <location>
        <begin position="185"/>
        <end position="424"/>
    </location>
</feature>
<feature type="disulfide bond" evidence="1">
    <location>
        <begin position="319"/>
        <end position="333"/>
    </location>
</feature>
<feature type="disulfide bond" evidence="1">
    <location>
        <begin position="343"/>
        <end position="366"/>
    </location>
</feature>
<feature type="disulfide bond" evidence="1">
    <location>
        <begin position="350"/>
        <end position="359"/>
    </location>
</feature>
<feature type="disulfide bond" evidence="1">
    <location>
        <begin position="388"/>
        <end position="394"/>
    </location>
</feature>